<feature type="chain" id="PRO_0000450710" description="Cysteine-tryptophan domain-containing zinc finger protein 7">
    <location>
        <begin position="1"/>
        <end position="1600"/>
    </location>
</feature>
<feature type="zinc finger region" description="CW-type" evidence="1">
    <location>
        <begin position="647"/>
        <end position="700"/>
    </location>
</feature>
<feature type="region of interest" description="Disordered" evidence="2">
    <location>
        <begin position="1"/>
        <end position="39"/>
    </location>
</feature>
<feature type="region of interest" description="Disordered" evidence="2">
    <location>
        <begin position="92"/>
        <end position="174"/>
    </location>
</feature>
<feature type="region of interest" description="Disordered" evidence="2">
    <location>
        <begin position="431"/>
        <end position="456"/>
    </location>
</feature>
<feature type="region of interest" description="Disordered" evidence="2">
    <location>
        <begin position="471"/>
        <end position="632"/>
    </location>
</feature>
<feature type="region of interest" description="Disordered" evidence="2">
    <location>
        <begin position="727"/>
        <end position="754"/>
    </location>
</feature>
<feature type="region of interest" description="Disordered" evidence="2">
    <location>
        <begin position="773"/>
        <end position="1054"/>
    </location>
</feature>
<feature type="region of interest" description="Disordered" evidence="2">
    <location>
        <begin position="1067"/>
        <end position="1120"/>
    </location>
</feature>
<feature type="region of interest" description="Disordered" evidence="2">
    <location>
        <begin position="1155"/>
        <end position="1210"/>
    </location>
</feature>
<feature type="region of interest" description="Disordered" evidence="2">
    <location>
        <begin position="1241"/>
        <end position="1319"/>
    </location>
</feature>
<feature type="region of interest" description="Disordered" evidence="2">
    <location>
        <begin position="1331"/>
        <end position="1362"/>
    </location>
</feature>
<feature type="region of interest" description="Disordered" evidence="2">
    <location>
        <begin position="1481"/>
        <end position="1517"/>
    </location>
</feature>
<feature type="compositionally biased region" description="Basic and acidic residues" evidence="2">
    <location>
        <begin position="1"/>
        <end position="12"/>
    </location>
</feature>
<feature type="compositionally biased region" description="Acidic residues" evidence="2">
    <location>
        <begin position="25"/>
        <end position="38"/>
    </location>
</feature>
<feature type="compositionally biased region" description="Polar residues" evidence="2">
    <location>
        <begin position="92"/>
        <end position="126"/>
    </location>
</feature>
<feature type="compositionally biased region" description="Basic and acidic residues" evidence="2">
    <location>
        <begin position="146"/>
        <end position="160"/>
    </location>
</feature>
<feature type="compositionally biased region" description="Polar residues" evidence="2">
    <location>
        <begin position="161"/>
        <end position="173"/>
    </location>
</feature>
<feature type="compositionally biased region" description="Basic and acidic residues" evidence="2">
    <location>
        <begin position="431"/>
        <end position="455"/>
    </location>
</feature>
<feature type="compositionally biased region" description="Basic and acidic residues" evidence="2">
    <location>
        <begin position="498"/>
        <end position="509"/>
    </location>
</feature>
<feature type="compositionally biased region" description="Polar residues" evidence="2">
    <location>
        <begin position="510"/>
        <end position="520"/>
    </location>
</feature>
<feature type="compositionally biased region" description="Basic residues" evidence="2">
    <location>
        <begin position="547"/>
        <end position="556"/>
    </location>
</feature>
<feature type="compositionally biased region" description="Basic and acidic residues" evidence="2">
    <location>
        <begin position="557"/>
        <end position="575"/>
    </location>
</feature>
<feature type="compositionally biased region" description="Basic and acidic residues" evidence="2">
    <location>
        <begin position="585"/>
        <end position="626"/>
    </location>
</feature>
<feature type="compositionally biased region" description="Basic and acidic residues" evidence="2">
    <location>
        <begin position="791"/>
        <end position="804"/>
    </location>
</feature>
<feature type="compositionally biased region" description="Basic and acidic residues" evidence="2">
    <location>
        <begin position="834"/>
        <end position="855"/>
    </location>
</feature>
<feature type="compositionally biased region" description="Low complexity" evidence="2">
    <location>
        <begin position="896"/>
        <end position="908"/>
    </location>
</feature>
<feature type="compositionally biased region" description="Basic and acidic residues" evidence="2">
    <location>
        <begin position="909"/>
        <end position="956"/>
    </location>
</feature>
<feature type="compositionally biased region" description="Polar residues" evidence="2">
    <location>
        <begin position="957"/>
        <end position="976"/>
    </location>
</feature>
<feature type="compositionally biased region" description="Basic and acidic residues" evidence="2">
    <location>
        <begin position="977"/>
        <end position="996"/>
    </location>
</feature>
<feature type="compositionally biased region" description="Polar residues" evidence="2">
    <location>
        <begin position="1010"/>
        <end position="1020"/>
    </location>
</feature>
<feature type="compositionally biased region" description="Polar residues" evidence="2">
    <location>
        <begin position="1090"/>
        <end position="1105"/>
    </location>
</feature>
<feature type="compositionally biased region" description="Polar residues" evidence="2">
    <location>
        <begin position="1172"/>
        <end position="1183"/>
    </location>
</feature>
<feature type="compositionally biased region" description="Basic and acidic residues" evidence="2">
    <location>
        <begin position="1188"/>
        <end position="1203"/>
    </location>
</feature>
<feature type="compositionally biased region" description="Basic and acidic residues" evidence="2">
    <location>
        <begin position="1241"/>
        <end position="1251"/>
    </location>
</feature>
<feature type="compositionally biased region" description="Polar residues" evidence="2">
    <location>
        <begin position="1252"/>
        <end position="1263"/>
    </location>
</feature>
<feature type="compositionally biased region" description="Basic and acidic residues" evidence="2">
    <location>
        <begin position="1277"/>
        <end position="1292"/>
    </location>
</feature>
<feature type="compositionally biased region" description="Polar residues" evidence="2">
    <location>
        <begin position="1342"/>
        <end position="1353"/>
    </location>
</feature>
<feature type="compositionally biased region" description="Polar residues" evidence="2">
    <location>
        <begin position="1487"/>
        <end position="1517"/>
    </location>
</feature>
<feature type="binding site" evidence="1">
    <location>
        <position position="656"/>
    </location>
    <ligand>
        <name>Zn(2+)</name>
        <dbReference type="ChEBI" id="CHEBI:29105"/>
    </ligand>
</feature>
<feature type="binding site" evidence="1">
    <location>
        <position position="659"/>
    </location>
    <ligand>
        <name>Zn(2+)</name>
        <dbReference type="ChEBI" id="CHEBI:29105"/>
    </ligand>
</feature>
<feature type="binding site" evidence="1">
    <location>
        <position position="680"/>
    </location>
    <ligand>
        <name>Zn(2+)</name>
        <dbReference type="ChEBI" id="CHEBI:29105"/>
    </ligand>
</feature>
<feature type="binding site" evidence="1">
    <location>
        <position position="692"/>
    </location>
    <ligand>
        <name>Zn(2+)</name>
        <dbReference type="ChEBI" id="CHEBI:29105"/>
    </ligand>
</feature>
<feature type="mutagenesis site" description="Abolishes binding to histone H3K4me3." evidence="3">
    <original>W</original>
    <variation>A</variation>
    <location>
        <position position="653"/>
    </location>
</feature>
<feature type="mutagenesis site" description="Abolishes binding to histone H3K4me3." evidence="3">
    <original>W</original>
    <variation>A</variation>
    <location>
        <position position="662"/>
    </location>
</feature>
<feature type="mutagenesis site" description="Abolishes binding to histone H3K4me3." evidence="3">
    <original>W</original>
    <variation>A</variation>
    <location>
        <position position="678"/>
    </location>
</feature>
<comment type="function">
    <text evidence="3 4">Transcriptional activator that acts as a positive regulator of grain size (PubMed:31830332). Binds directly to the DNA core sequence 5'-CATTTC-3' found in the promoter of MADS1, and activates MADS1 transcription (PubMed:31830332). Increases grain width via direct up-regulation of MADS1 expression (PubMed:31830332). Promotes active chromatin modification at the MADS1 locus by increasing its level of histone H3K4me3 (PubMed:31830332). In GST pull-down assay, binds specifically to histone H3K4me3, but not to H3K4me1 or H3K4me2 (PubMed:28818372). May facilitate the recruitment of effectors to mediate gene expression (PubMed:28818372).</text>
</comment>
<comment type="subunit">
    <text evidence="3">Interacts with TBP2, a subunit of the transcription initiation factor TFIID.</text>
</comment>
<comment type="subcellular location">
    <subcellularLocation>
        <location evidence="3">Nucleus</location>
    </subcellularLocation>
    <text evidence="3">Exhibits a speckle-like distribution in the nucleus.</text>
</comment>
<comment type="tissue specificity">
    <text evidence="3 4">Highly expressed in young panicles (PubMed:28818372, PubMed:31830332). Highly expressed in axillary buds (PubMed:28818372). Expressed in leaf sheaths, flag leaves, nodes and internodes (PubMed:28818372). Expressed in roots, culms, leaf sheaths and leaf blades (PubMed:31830332).</text>
</comment>
<comment type="domain">
    <text evidence="3">The CW-type zinc finger domain is not required for nuclear localization.</text>
</comment>
<comment type="disruption phenotype">
    <text evidence="4">Reduced plant size and grain size.</text>
</comment>
<comment type="miscellaneous">
    <text evidence="3">Plants silencing CWZF7 exhibit defective development of awns in grains.</text>
</comment>
<comment type="sequence caution" evidence="7">
    <conflict type="erroneous gene model prediction">
        <sequence resource="EMBL-CDS" id="BAF22504"/>
    </conflict>
</comment>
<comment type="sequence caution" evidence="7">
    <conflict type="erroneous gene model prediction">
        <sequence resource="EMBL-CDS" id="BAT03144"/>
    </conflict>
</comment>
<dbReference type="EMBL" id="AP008213">
    <property type="protein sequence ID" value="BAF22504.1"/>
    <property type="status" value="ALT_SEQ"/>
    <property type="molecule type" value="Genomic_DNA"/>
</dbReference>
<dbReference type="EMBL" id="AP014963">
    <property type="protein sequence ID" value="BAT03144.1"/>
    <property type="status" value="ALT_SEQ"/>
    <property type="molecule type" value="Genomic_DNA"/>
</dbReference>
<dbReference type="RefSeq" id="NP_001409942.1">
    <property type="nucleotide sequence ID" value="NM_001423013.1"/>
</dbReference>
<dbReference type="RefSeq" id="XP_015646825.1">
    <property type="nucleotide sequence ID" value="XM_015791339.1"/>
</dbReference>
<dbReference type="RefSeq" id="XP_015646826.1">
    <property type="nucleotide sequence ID" value="XM_015791340.2"/>
</dbReference>
<dbReference type="RefSeq" id="XP_015646827.1">
    <property type="nucleotide sequence ID" value="XM_015791341.2"/>
</dbReference>
<dbReference type="RefSeq" id="XP_066168101.1">
    <property type="nucleotide sequence ID" value="XM_066312004.1"/>
</dbReference>
<dbReference type="SMR" id="A0A0P0X9Z7"/>
<dbReference type="FunCoup" id="A0A0P0X9Z7">
    <property type="interactions" value="1068"/>
</dbReference>
<dbReference type="STRING" id="39947.A0A0P0X9Z7"/>
<dbReference type="PaxDb" id="39947-A0A0P0X9Z7"/>
<dbReference type="EnsemblPlants" id="Os07t0669800-01">
    <property type="protein sequence ID" value="Os07t0669800-01"/>
    <property type="gene ID" value="Os07g0669800"/>
</dbReference>
<dbReference type="GeneID" id="4344236"/>
<dbReference type="Gramene" id="Os07t0669800-01">
    <property type="protein sequence ID" value="Os07t0669800-01"/>
    <property type="gene ID" value="Os07g0669800"/>
</dbReference>
<dbReference type="KEGG" id="dosa:Os07g0669800"/>
<dbReference type="KEGG" id="osa:4344236"/>
<dbReference type="eggNOG" id="ENOG502QS65">
    <property type="taxonomic scope" value="Eukaryota"/>
</dbReference>
<dbReference type="InParanoid" id="A0A0P0X9Z7"/>
<dbReference type="OrthoDB" id="757982at2759"/>
<dbReference type="Proteomes" id="UP000000763">
    <property type="component" value="Chromosome 7"/>
</dbReference>
<dbReference type="Proteomes" id="UP000059680">
    <property type="component" value="Chromosome 7"/>
</dbReference>
<dbReference type="GO" id="GO:0005634">
    <property type="term" value="C:nucleus"/>
    <property type="evidence" value="ECO:0000314"/>
    <property type="project" value="UniProtKB"/>
</dbReference>
<dbReference type="GO" id="GO:0043565">
    <property type="term" value="F:sequence-specific DNA binding"/>
    <property type="evidence" value="ECO:0000314"/>
    <property type="project" value="UniProtKB"/>
</dbReference>
<dbReference type="GO" id="GO:0008270">
    <property type="term" value="F:zinc ion binding"/>
    <property type="evidence" value="ECO:0007669"/>
    <property type="project" value="UniProtKB-KW"/>
</dbReference>
<dbReference type="GO" id="GO:0045893">
    <property type="term" value="P:positive regulation of DNA-templated transcription"/>
    <property type="evidence" value="ECO:0000314"/>
    <property type="project" value="UniProtKB"/>
</dbReference>
<dbReference type="GO" id="GO:0080113">
    <property type="term" value="P:regulation of seed growth"/>
    <property type="evidence" value="ECO:0000315"/>
    <property type="project" value="UniProtKB"/>
</dbReference>
<dbReference type="Gene3D" id="3.30.40.100">
    <property type="match status" value="1"/>
</dbReference>
<dbReference type="InterPro" id="IPR055300">
    <property type="entry name" value="CWZF3/5/7"/>
</dbReference>
<dbReference type="InterPro" id="IPR056406">
    <property type="entry name" value="THD_CWZF3/5/7"/>
</dbReference>
<dbReference type="InterPro" id="IPR011124">
    <property type="entry name" value="Znf_CW"/>
</dbReference>
<dbReference type="PANTHER" id="PTHR46524">
    <property type="entry name" value="CW-TYPE ZINC FINGER"/>
    <property type="match status" value="1"/>
</dbReference>
<dbReference type="PANTHER" id="PTHR46524:SF19">
    <property type="entry name" value="CYSTEINE-TRYPTOPHAN DOMAIN-CONTAINING ZINC FINGER PROTEIN 7"/>
    <property type="match status" value="1"/>
</dbReference>
<dbReference type="Pfam" id="PF24756">
    <property type="entry name" value="THD_CWZF3-5-7"/>
    <property type="match status" value="1"/>
</dbReference>
<dbReference type="Pfam" id="PF07496">
    <property type="entry name" value="zf-CW"/>
    <property type="match status" value="1"/>
</dbReference>
<dbReference type="PROSITE" id="PS51050">
    <property type="entry name" value="ZF_CW"/>
    <property type="match status" value="1"/>
</dbReference>
<sequence>MLSVRRRQEDARGVGLRGGAAAGGMEDDAELEEGEACGDETAFVDPDVALSYIDEKIQDVLGHFQKDFEGAVSAENLGSKFGGYGSFLPTYQRSPLPQTRSPPKAANVSSRSPYHQPTESMSQNTLAVAAPSVSKHNGSMVPLSDDSSKKEVHQSTKVERASSTQDSLNGLSKSSDHNRFKVRIKVGSDNGLARNNAAIYSGLGLDISSPSSIEDSPDGCGSLSPEFNNVPIESPRTILQIMTCFSVPGGFLLSPLRDDLVQLTQKVVPTSKKWETNANTENVQERYEGYAAKRVKSDAKKKKAVDTKRSKSRNDVSAVMKNEIDIETPAGQKIVLEALNIPLLSNPRTMEAKDGSQFEEDPMRDTLVENKDARLKERTINSDLMAIKYENVKAEAAECLENSGPGSSGMDFSAVKGEVKFKAEKAEIHVEDRNTTSEKDFQSDRKQERKIKTESKCNATGVNFEGNKVMNERTPVVGRSIGKVSSKETLLNDINEENVSKSESRRSQKEQNMNASSSSDFLEDDRGVLSSGAVKERKNDSQSKSSHPGRKPKAKSHRDVREHLPEGSYGGKDDTLENGSGLGELRPKKIWKNDSERDSDMPGTSKREISSSLKNDRHTPAEEQRMHVPPSVSAPTANAAPMLPAPVVIEEHWVCCDICQKWRLLPYKMNPSLLPKKWKCSMLQWLPGMNRCEVSEDETTNALNALYVSPAPGNGVASVGHSHVASSGLTTSNTLNVNGHVEQSRKRKNTLSDGNVSFDVSQQMQGSVYPLSNQHAPIRSKSAADSIQFPVERDSKSVDHFVEKKRSKSKNHGSSSDGGHLVERSKKHSKVKSKREMDHDEYRTSKKIKKEERRQRQSGIDSNPGYDLASGDVPDEAKALPSKSMALQGSSERSDVPPSKYKSVSKYNSSEKSKRSKDGDVFLPEDKNKEHSYPSDAQKPDLSSKKRIVKEWEESQHNSTPPVSKMSIVNQSSSSKETCKDQNLKETKSKLTKSEEPFAMTDSKSIKVAHSNQTSRNLNNELFEDSTPFAVKSGMSEPPENRSSEQALDLAEPASSDLAYFQTTAVTSSSSKASGSQRRKQNFHVAKTSPIESVSSSPPRISNNDKVSHDKILGKDGSTCANTNNMQSLVKNTEVIVDNVRQARKSHESMLASEPVMNGFSQGNSDKDNELPQLTQGHASNGIISGRSLDDDLQHASGRKDSSLKSSNAARSHNHLHYANKNNLLTDGSSIQHRMAVLDTKGDSMVHENKRSVTSLQDRNGSTHYPPDGNPQSEVSFGKEKSHPKSNKHDMQNSKAQMLPSPLKESKVESHSAPLRSNASKLTAQLKRGNVENGGQHGITKQAISNPADTSSPVRKDNNSTGYALKEARDLKHKANRLKEEGKEQESTRLYFESALKYLHVASTLEPPPSIDGFKQCDAAQNLYSDTAKLCNFVGHAYEKSKKMAAAALAYKCVEVAYLKAAYYKYPTASKDRQMLQAIVQNPPGESPSSSASDIDNLNNNGLSKGPSSKDANSPQVTGNNLLLAARNQPHLTRLLAYTNDVNCAFDATRKSQMAIASAASNQENGIDGLSSVKTVLDFNFQSVNDLLRLVRLSMESISC</sequence>
<gene>
    <name evidence="5" type="primary">CWZF7</name>
    <name evidence="6" type="synonym">WG7</name>
    <name evidence="8" type="ordered locus">Os07g0669800</name>
    <name evidence="7" type="ordered locus">LOC_Os07g47360</name>
</gene>
<accession>A0A0P0X9Z7</accession>
<accession>Q0D3R9</accession>
<keyword id="KW-0010">Activator</keyword>
<keyword id="KW-0479">Metal-binding</keyword>
<keyword id="KW-0539">Nucleus</keyword>
<keyword id="KW-1185">Reference proteome</keyword>
<keyword id="KW-0804">Transcription</keyword>
<keyword id="KW-0805">Transcription regulation</keyword>
<keyword id="KW-0862">Zinc</keyword>
<keyword id="KW-0863">Zinc-finger</keyword>
<reference key="1">
    <citation type="journal article" date="2005" name="Nature">
        <title>The map-based sequence of the rice genome.</title>
        <authorList>
            <consortium name="International rice genome sequencing project (IRGSP)"/>
        </authorList>
    </citation>
    <scope>NUCLEOTIDE SEQUENCE [LARGE SCALE GENOMIC DNA]</scope>
    <source>
        <strain>cv. Nipponbare</strain>
    </source>
</reference>
<reference key="2">
    <citation type="journal article" date="2008" name="Nucleic Acids Res.">
        <title>The rice annotation project database (RAP-DB): 2008 update.</title>
        <authorList>
            <consortium name="The rice annotation project (RAP)"/>
        </authorList>
    </citation>
    <scope>GENOME REANNOTATION</scope>
    <source>
        <strain>cv. Nipponbare</strain>
    </source>
</reference>
<reference key="3">
    <citation type="journal article" date="2013" name="Rice">
        <title>Improvement of the Oryza sativa Nipponbare reference genome using next generation sequence and optical map data.</title>
        <authorList>
            <person name="Kawahara Y."/>
            <person name="de la Bastide M."/>
            <person name="Hamilton J.P."/>
            <person name="Kanamori H."/>
            <person name="McCombie W.R."/>
            <person name="Ouyang S."/>
            <person name="Schwartz D.C."/>
            <person name="Tanaka T."/>
            <person name="Wu J."/>
            <person name="Zhou S."/>
            <person name="Childs K.L."/>
            <person name="Davidson R.M."/>
            <person name="Lin H."/>
            <person name="Quesada-Ocampo L."/>
            <person name="Vaillancourt B."/>
            <person name="Sakai H."/>
            <person name="Lee S.S."/>
            <person name="Kim J."/>
            <person name="Numa H."/>
            <person name="Itoh T."/>
            <person name="Buell C.R."/>
            <person name="Matsumoto T."/>
        </authorList>
    </citation>
    <scope>GENOME REANNOTATION</scope>
    <source>
        <strain>cv. Nipponbare</strain>
    </source>
</reference>
<reference key="4">
    <citation type="journal article" date="2017" name="Plant Sci.">
        <title>Functional characterization of rice CW-domain containing zinc finger proteins involved in histone recognition.</title>
        <authorList>
            <person name="Zhang Z."/>
            <person name="Zhang F."/>
            <person name="Cheng Z.J."/>
            <person name="Liu L.L."/>
            <person name="Lin Q.B."/>
            <person name="Wu F.Q."/>
            <person name="Zhang H."/>
            <person name="Wang J.L."/>
            <person name="Wang J."/>
            <person name="Guo X.P."/>
            <person name="Zhang X."/>
            <person name="Lei C.L."/>
            <person name="Zhao Z.C."/>
            <person name="Zhu S.S."/>
            <person name="Wan J.M."/>
        </authorList>
    </citation>
    <scope>FUNCTION</scope>
    <scope>INTERACTION WITH TBP2</scope>
    <scope>SUBCELLULAR LOCATION</scope>
    <scope>TISSUE SPECIFICITY</scope>
    <scope>DOMAIN</scope>
    <scope>MUTAGENESIS OF TRP-653; TRP-662 AND TRP-678</scope>
</reference>
<reference key="5">
    <citation type="journal article" date="2020" name="Plant J.">
        <title>Wide Grain 7 increases grain width by enhancing H3K4me3 enrichment in the OsMADS1 promoter in rice (Oryza sativa L.).</title>
        <authorList>
            <person name="Huang Y."/>
            <person name="Bai X."/>
            <person name="Cheng N."/>
            <person name="Xiao J."/>
            <person name="Li X."/>
            <person name="Xing Y."/>
        </authorList>
    </citation>
    <scope>FUNCTION</scope>
    <scope>TISSUE SPECIFICITY</scope>
    <scope>DISRUPTION PHENOTYPE</scope>
</reference>
<name>CWZF7_ORYSJ</name>
<proteinExistence type="evidence at protein level"/>
<evidence type="ECO:0000255" key="1">
    <source>
        <dbReference type="PROSITE-ProRule" id="PRU00454"/>
    </source>
</evidence>
<evidence type="ECO:0000256" key="2">
    <source>
        <dbReference type="SAM" id="MobiDB-lite"/>
    </source>
</evidence>
<evidence type="ECO:0000269" key="3">
    <source>
    </source>
</evidence>
<evidence type="ECO:0000269" key="4">
    <source>
    </source>
</evidence>
<evidence type="ECO:0000303" key="5">
    <source>
    </source>
</evidence>
<evidence type="ECO:0000303" key="6">
    <source>
    </source>
</evidence>
<evidence type="ECO:0000305" key="7"/>
<evidence type="ECO:0000312" key="8">
    <source>
        <dbReference type="EMBL" id="BAT03144.1"/>
    </source>
</evidence>
<organism>
    <name type="scientific">Oryza sativa subsp. japonica</name>
    <name type="common">Rice</name>
    <dbReference type="NCBI Taxonomy" id="39947"/>
    <lineage>
        <taxon>Eukaryota</taxon>
        <taxon>Viridiplantae</taxon>
        <taxon>Streptophyta</taxon>
        <taxon>Embryophyta</taxon>
        <taxon>Tracheophyta</taxon>
        <taxon>Spermatophyta</taxon>
        <taxon>Magnoliopsida</taxon>
        <taxon>Liliopsida</taxon>
        <taxon>Poales</taxon>
        <taxon>Poaceae</taxon>
        <taxon>BOP clade</taxon>
        <taxon>Oryzoideae</taxon>
        <taxon>Oryzeae</taxon>
        <taxon>Oryzinae</taxon>
        <taxon>Oryza</taxon>
        <taxon>Oryza sativa</taxon>
    </lineage>
</organism>
<protein>
    <recommendedName>
        <fullName evidence="5">Cysteine-tryptophan domain-containing zinc finger protein 7</fullName>
        <shortName evidence="5">OsCW-ZF7</shortName>
    </recommendedName>
    <alternativeName>
        <fullName evidence="6">Protein WIDE GRAIN 7</fullName>
    </alternativeName>
</protein>